<evidence type="ECO:0000255" key="1"/>
<evidence type="ECO:0000269" key="2">
    <source>
    </source>
</evidence>
<evidence type="ECO:0000269" key="3">
    <source>
    </source>
</evidence>
<evidence type="ECO:0000303" key="4">
    <source>
    </source>
</evidence>
<evidence type="ECO:0000305" key="5"/>
<evidence type="ECO:0000305" key="6">
    <source>
    </source>
</evidence>
<feature type="chain" id="PRO_0000409234" description="Bifunctional lycopene cyclase/phytoene synthase">
    <location>
        <begin position="1"/>
        <end position="608"/>
    </location>
</feature>
<feature type="transmembrane region" description="Helical" evidence="1">
    <location>
        <begin position="3"/>
        <end position="23"/>
    </location>
</feature>
<feature type="transmembrane region" description="Helical" evidence="1">
    <location>
        <begin position="37"/>
        <end position="56"/>
    </location>
</feature>
<feature type="transmembrane region" description="Helical" evidence="1">
    <location>
        <begin position="80"/>
        <end position="97"/>
    </location>
</feature>
<feature type="transmembrane region" description="Helical" evidence="1">
    <location>
        <begin position="117"/>
        <end position="137"/>
    </location>
</feature>
<feature type="transmembrane region" description="Helical" evidence="1">
    <location>
        <begin position="150"/>
        <end position="170"/>
    </location>
</feature>
<feature type="transmembrane region" description="Helical" evidence="1">
    <location>
        <begin position="175"/>
        <end position="195"/>
    </location>
</feature>
<feature type="transmembrane region" description="Helical" evidence="1">
    <location>
        <begin position="218"/>
        <end position="238"/>
    </location>
</feature>
<feature type="region of interest" description="Lycopene beta-cyclase" evidence="6">
    <location>
        <begin position="1"/>
        <end position="240"/>
    </location>
</feature>
<feature type="region of interest" description="Phytoene synthase" evidence="6">
    <location>
        <begin position="247"/>
        <end position="608"/>
    </location>
</feature>
<feature type="sequence variant" description="In strain: F-744 / L25; beta-carotene overproducing strain." evidence="2">
    <original>P</original>
    <variation>S</variation>
    <location>
        <position position="143"/>
    </location>
</feature>
<accession>Q67GH9</accession>
<accession>Q67GI1</accession>
<comment type="function">
    <text evidence="2">Bifunctional enzyme that catalyzes the reactions from geranylgeranyl diphosphate to phytoene (phytoene synthase) and lycopene to beta-carotene via the intermediate gamma-carotene (lycopene cyclase).</text>
</comment>
<comment type="catalytic activity">
    <reaction evidence="2">
        <text>all-trans-lycopene = gamma-carotene</text>
        <dbReference type="Rhea" id="RHEA:32219"/>
        <dbReference type="ChEBI" id="CHEBI:15948"/>
        <dbReference type="ChEBI" id="CHEBI:27740"/>
        <dbReference type="EC" id="5.5.1.19"/>
    </reaction>
</comment>
<comment type="catalytic activity">
    <reaction evidence="2">
        <text>gamma-carotene = all-trans-beta-carotene</text>
        <dbReference type="Rhea" id="RHEA:32239"/>
        <dbReference type="ChEBI" id="CHEBI:17579"/>
        <dbReference type="ChEBI" id="CHEBI:27740"/>
        <dbReference type="EC" id="5.5.1.19"/>
    </reaction>
</comment>
<comment type="catalytic activity">
    <reaction evidence="2">
        <text>2 (2E,6E,10E)-geranylgeranyl diphosphate = 15-cis-phytoene + 2 diphosphate</text>
        <dbReference type="Rhea" id="RHEA:34475"/>
        <dbReference type="ChEBI" id="CHEBI:27787"/>
        <dbReference type="ChEBI" id="CHEBI:33019"/>
        <dbReference type="ChEBI" id="CHEBI:58756"/>
        <dbReference type="EC" id="2.5.1.32"/>
    </reaction>
</comment>
<comment type="pathway">
    <text evidence="2">Carotenoid biosynthesis; beta-carotene biosynthesis.</text>
</comment>
<comment type="pathway">
    <text evidence="2">Carotenoid biosynthesis; phytoene biosynthesis; all-trans-phytoene from geranylgeranyl diphosphate: step 1/1.</text>
</comment>
<comment type="subcellular location">
    <subcellularLocation>
        <location evidence="5">Membrane</location>
        <topology evidence="5">Multi-pass membrane protein</topology>
    </subcellularLocation>
</comment>
<comment type="induction">
    <text evidence="3">Strongly induced during mating of two strains of the opposite sex.</text>
</comment>
<comment type="biotechnology">
    <text evidence="2">Beta-carotene is a popular additive for butter, ice cream, orange juice and candies in the food industry. B.trispora is one of the microorganisms of choice for industrial production of this molecule.</text>
</comment>
<comment type="similarity">
    <text evidence="5">In the N-terminal section; belongs to the lycopene beta-cyclase family.</text>
</comment>
<comment type="similarity">
    <text evidence="5">In the C-terminal section; belongs to the phytoene/squalene synthase family.</text>
</comment>
<dbReference type="EC" id="5.5.1.19" evidence="2"/>
<dbReference type="EC" id="2.5.1.32" evidence="2"/>
<dbReference type="EMBL" id="AY176662">
    <property type="protein sequence ID" value="AAO46893.1"/>
    <property type="molecule type" value="Genomic_DNA"/>
</dbReference>
<dbReference type="EMBL" id="AY176663">
    <property type="protein sequence ID" value="AAO46895.1"/>
    <property type="molecule type" value="Genomic_DNA"/>
</dbReference>
<dbReference type="EMBL" id="AY884174">
    <property type="protein sequence ID" value="AAX20904.1"/>
    <property type="molecule type" value="Genomic_DNA"/>
</dbReference>
<dbReference type="SMR" id="Q67GH9"/>
<dbReference type="OrthoDB" id="6600518at2759"/>
<dbReference type="UniPathway" id="UPA00799">
    <property type="reaction ID" value="UER00773"/>
</dbReference>
<dbReference type="UniPathway" id="UPA00802"/>
<dbReference type="GO" id="GO:0016020">
    <property type="term" value="C:membrane"/>
    <property type="evidence" value="ECO:0007669"/>
    <property type="project" value="UniProtKB-SubCell"/>
</dbReference>
<dbReference type="GO" id="GO:0046905">
    <property type="term" value="F:15-cis-phytoene synthase activity"/>
    <property type="evidence" value="ECO:0000314"/>
    <property type="project" value="UniProtKB"/>
</dbReference>
<dbReference type="GO" id="GO:0004311">
    <property type="term" value="F:geranylgeranyl diphosphate synthase activity"/>
    <property type="evidence" value="ECO:0007669"/>
    <property type="project" value="InterPro"/>
</dbReference>
<dbReference type="GO" id="GO:0016872">
    <property type="term" value="F:intramolecular lyase activity"/>
    <property type="evidence" value="ECO:0007669"/>
    <property type="project" value="InterPro"/>
</dbReference>
<dbReference type="GO" id="GO:0045436">
    <property type="term" value="F:lycopene beta cyclase activity"/>
    <property type="evidence" value="ECO:0000314"/>
    <property type="project" value="UniProtKB"/>
</dbReference>
<dbReference type="GO" id="GO:0051996">
    <property type="term" value="F:squalene synthase [NAD(P)H] activity"/>
    <property type="evidence" value="ECO:0007669"/>
    <property type="project" value="InterPro"/>
</dbReference>
<dbReference type="GO" id="GO:0016120">
    <property type="term" value="P:carotene biosynthetic process"/>
    <property type="evidence" value="ECO:0000314"/>
    <property type="project" value="UniProtKB"/>
</dbReference>
<dbReference type="GO" id="GO:0016117">
    <property type="term" value="P:carotenoid biosynthetic process"/>
    <property type="evidence" value="ECO:0007669"/>
    <property type="project" value="UniProtKB-KW"/>
</dbReference>
<dbReference type="CDD" id="cd00683">
    <property type="entry name" value="Trans_IPPS_HH"/>
    <property type="match status" value="1"/>
</dbReference>
<dbReference type="FunFam" id="1.10.600.10:FF:000020">
    <property type="entry name" value="Phytoene synthase"/>
    <property type="match status" value="1"/>
</dbReference>
<dbReference type="Gene3D" id="1.10.600.10">
    <property type="entry name" value="Farnesyl Diphosphate Synthase"/>
    <property type="match status" value="1"/>
</dbReference>
<dbReference type="InterPro" id="IPR008949">
    <property type="entry name" value="Isoprenoid_synthase_dom_sf"/>
</dbReference>
<dbReference type="InterPro" id="IPR017825">
    <property type="entry name" value="Lycopene_cyclase_dom"/>
</dbReference>
<dbReference type="InterPro" id="IPR002060">
    <property type="entry name" value="Squ/phyt_synthse"/>
</dbReference>
<dbReference type="InterPro" id="IPR019845">
    <property type="entry name" value="Squalene/phytoene_synthase_CS"/>
</dbReference>
<dbReference type="InterPro" id="IPR044843">
    <property type="entry name" value="Trans_IPPS_bact-type"/>
</dbReference>
<dbReference type="InterPro" id="IPR033904">
    <property type="entry name" value="Trans_IPPS_HH"/>
</dbReference>
<dbReference type="NCBIfam" id="TIGR03462">
    <property type="entry name" value="CarR_dom_SF"/>
    <property type="match status" value="2"/>
</dbReference>
<dbReference type="PANTHER" id="PTHR31480">
    <property type="entry name" value="BIFUNCTIONAL LYCOPENE CYCLASE/PHYTOENE SYNTHASE"/>
    <property type="match status" value="1"/>
</dbReference>
<dbReference type="Pfam" id="PF00494">
    <property type="entry name" value="SQS_PSY"/>
    <property type="match status" value="1"/>
</dbReference>
<dbReference type="SFLD" id="SFLDG01212">
    <property type="entry name" value="Phytoene_synthase_like"/>
    <property type="match status" value="1"/>
</dbReference>
<dbReference type="SFLD" id="SFLDG01018">
    <property type="entry name" value="Squalene/Phytoene_Synthase_Lik"/>
    <property type="match status" value="1"/>
</dbReference>
<dbReference type="SUPFAM" id="SSF48576">
    <property type="entry name" value="Terpenoid synthases"/>
    <property type="match status" value="1"/>
</dbReference>
<dbReference type="PROSITE" id="PS01045">
    <property type="entry name" value="SQUALEN_PHYTOEN_SYN_2"/>
    <property type="match status" value="1"/>
</dbReference>
<keyword id="KW-0125">Carotenoid biosynthesis</keyword>
<keyword id="KW-0413">Isomerase</keyword>
<keyword id="KW-0472">Membrane</keyword>
<keyword id="KW-0511">Multifunctional enzyme</keyword>
<keyword id="KW-0808">Transferase</keyword>
<keyword id="KW-0812">Transmembrane</keyword>
<keyword id="KW-1133">Transmembrane helix</keyword>
<gene>
    <name evidence="4" type="primary">carRA</name>
</gene>
<reference key="1">
    <citation type="journal article" date="2004" name="Appl. Environ. Microbiol.">
        <title>Blakeslea trispora genes for carotene biosynthesis.</title>
        <authorList>
            <person name="Rodriguez-Saiz M."/>
            <person name="Paz B."/>
            <person name="De La Fuente J.L."/>
            <person name="Lopez-Nieto M.J."/>
            <person name="Cabri W."/>
            <person name="Barredo J.L."/>
        </authorList>
    </citation>
    <scope>NUCLEOTIDE SEQUENCE [GENOMIC DNA]</scope>
    <scope>VARIANT SER-143</scope>
    <scope>FUNCTION</scope>
    <scope>CATALYTIC ACTIVITY</scope>
    <scope>BIOTECHNOLOGY</scope>
    <source>
        <strain>ATCC 14272 / CBS 131.59 / IMI 195169 / NRRL 2457 / QM 6309</strain>
        <strain>F-744 / L25</strain>
    </source>
</reference>
<reference key="2">
    <citation type="journal article" date="2005" name="Appl. Microbiol. Biotechnol.">
        <title>Analysis of mating-dependent transcription of Blakeslea trispora carotenoid biosynthesis genes carB and carRA by quantitative real-time PCR.</title>
        <authorList>
            <person name="Schmidt A.D."/>
            <person name="Heinekamp T."/>
            <person name="Matuschek M."/>
            <person name="Liebmann B."/>
            <person name="Bollschweiler C."/>
            <person name="Brakhage A.A."/>
        </authorList>
    </citation>
    <scope>NUCLEOTIDE SEQUENCE [GENOMIC DNA]</scope>
    <scope>INDUCTION</scope>
    <source>
        <strain>ATCC 14272 / CBS 131.59 / IMI 195169 / NRRL 2457 / QM 6309</strain>
    </source>
</reference>
<protein>
    <recommendedName>
        <fullName evidence="4">Bifunctional lycopene cyclase/phytoene synthase</fullName>
    </recommendedName>
    <domain>
        <recommendedName>
            <fullName evidence="4">Lycopene beta-cyclase</fullName>
            <ecNumber evidence="2">5.5.1.19</ecNumber>
        </recommendedName>
        <alternativeName>
            <fullName evidence="4">Lycopene cyclase</fullName>
        </alternativeName>
    </domain>
    <domain>
        <recommendedName>
            <fullName evidence="4">Phytoene synthase</fullName>
            <ecNumber evidence="2">2.5.1.32</ecNumber>
        </recommendedName>
    </domain>
</protein>
<proteinExistence type="evidence at protein level"/>
<name>LCPS_BLATR</name>
<organism>
    <name type="scientific">Blakeslea trispora</name>
    <name type="common">Choanephora trispora</name>
    <dbReference type="NCBI Taxonomy" id="4850"/>
    <lineage>
        <taxon>Eukaryota</taxon>
        <taxon>Fungi</taxon>
        <taxon>Fungi incertae sedis</taxon>
        <taxon>Mucoromycota</taxon>
        <taxon>Mucoromycotina</taxon>
        <taxon>Mucoromycetes</taxon>
        <taxon>Mucorales</taxon>
        <taxon>Mucorineae</taxon>
        <taxon>Choanephoraceae</taxon>
        <taxon>Choanephoroideae</taxon>
        <taxon>Blakeslea</taxon>
    </lineage>
</organism>
<sequence>MSILTYLEFHLYYTLPVLAALCWLLKPFHSQQDNLKYKFLMLMAASTASIWDNYIVYHRAWWYCPTCVVAVIGYVPLEEYMFFIIMTLMTVAFSNFVMRWHLHTFFIRPNTSWKQTLLVRLVPVSALLAITYHAWHLTLPNKPSFYGSCILWYACPVLAILWLGAGEYILRRPVAVLLSIVIPSVYLCWADIVAISAGTWHISLRTSTGKMVVPDLPVEECLFFTLINTVLVFATCAIDRAQAILHLYKSSVQNQNPKQAISLFQHVKELAWAFCLPDQMLNNELFDDLTISWDILRKASKSFYTASAVFPSYVRQDLGVLYAFCRATDDLCDDESKSVQERRDQLDLTRQFVRDLFSQKTSAPIVIDWELYQNQLPASCISAFRAFTRLRHVLEVDPVEELLDGYKWDLERRPILDEQDLEAYSACVASSVGEMCTRVILAQDQKENDAWIIDRAREMGLVLQYVNIARDIVTDSETLGRCYLPQQWLRKEETEQIQQGNARSLGDQRLLGLSLKLVGKADAIMVRAKKGIDKLPANCQGGVRAACQVYAAIGSVLKQQKTTYPTRAHLKGSERAKIALLSVYNLYQSEDKPVALRQARKIKSFFVD</sequence>